<keyword id="KW-0217">Developmental protein</keyword>
<keyword id="KW-1015">Disulfide bond</keyword>
<keyword id="KW-0272">Extracellular matrix</keyword>
<keyword id="KW-0325">Glycoprotein</keyword>
<keyword id="KW-0449">Lipoprotein</keyword>
<keyword id="KW-0964">Secreted</keyword>
<keyword id="KW-0879">Wnt signaling pathway</keyword>
<name>WNT3B_PLEJO</name>
<gene>
    <name type="primary">WNT-3B</name>
</gene>
<evidence type="ECO:0000250" key="1">
    <source>
        <dbReference type="UniProtKB" id="P27467"/>
    </source>
</evidence>
<evidence type="ECO:0000250" key="2">
    <source>
        <dbReference type="UniProtKB" id="P28026"/>
    </source>
</evidence>
<evidence type="ECO:0000250" key="3">
    <source>
        <dbReference type="UniProtKB" id="P56704"/>
    </source>
</evidence>
<evidence type="ECO:0000255" key="4"/>
<evidence type="ECO:0000305" key="5"/>
<sequence>SGSCEVKTCWWAQPDFRAIGDYLKDKYDSASEMAVEKHRESRGWVETLRARYALFKPPTERDLVYYEGSPNFCEPNPETGSFGTKDRTCNVTSHGIDGCDLLCCGRGHNTRTEKRKEKCHCIF</sequence>
<accession>P28134</accession>
<feature type="chain" id="PRO_0000200620" description="Protein Wnt-3b">
    <location>
        <begin position="1" status="less than"/>
        <end position="123" status="greater than"/>
    </location>
</feature>
<feature type="lipid moiety-binding region" description="O-palmitoleoyl serine; by PORCN" evidence="3">
    <location>
        <position position="1"/>
    </location>
</feature>
<feature type="glycosylation site" description="N-linked (GlcNAc...) asparagine" evidence="4">
    <location>
        <position position="90"/>
    </location>
</feature>
<feature type="disulfide bond" evidence="2">
    <location>
        <begin position="89"/>
        <end position="104"/>
    </location>
</feature>
<feature type="non-terminal residue">
    <location>
        <position position="1"/>
    </location>
</feature>
<feature type="non-terminal residue">
    <location>
        <position position="123"/>
    </location>
</feature>
<dbReference type="EMBL" id="M91291">
    <property type="protein sequence ID" value="AAA49459.1"/>
    <property type="molecule type" value="Genomic_DNA"/>
</dbReference>
<dbReference type="SMR" id="P28134"/>
<dbReference type="GlyCosmos" id="P28134">
    <property type="glycosylation" value="1 site, No reported glycans"/>
</dbReference>
<dbReference type="GO" id="GO:0005615">
    <property type="term" value="C:extracellular space"/>
    <property type="evidence" value="ECO:0007669"/>
    <property type="project" value="TreeGrafter"/>
</dbReference>
<dbReference type="GO" id="GO:0005125">
    <property type="term" value="F:cytokine activity"/>
    <property type="evidence" value="ECO:0007669"/>
    <property type="project" value="TreeGrafter"/>
</dbReference>
<dbReference type="GO" id="GO:0005109">
    <property type="term" value="F:frizzled binding"/>
    <property type="evidence" value="ECO:0007669"/>
    <property type="project" value="TreeGrafter"/>
</dbReference>
<dbReference type="GO" id="GO:0060070">
    <property type="term" value="P:canonical Wnt signaling pathway"/>
    <property type="evidence" value="ECO:0007669"/>
    <property type="project" value="TreeGrafter"/>
</dbReference>
<dbReference type="GO" id="GO:0045165">
    <property type="term" value="P:cell fate commitment"/>
    <property type="evidence" value="ECO:0007669"/>
    <property type="project" value="TreeGrafter"/>
</dbReference>
<dbReference type="GO" id="GO:0030182">
    <property type="term" value="P:neuron differentiation"/>
    <property type="evidence" value="ECO:0007669"/>
    <property type="project" value="TreeGrafter"/>
</dbReference>
<dbReference type="FunFam" id="3.30.2460.20:FF:000009">
    <property type="entry name" value="Protein Wnt-3a"/>
    <property type="match status" value="1"/>
</dbReference>
<dbReference type="Gene3D" id="3.30.2460.20">
    <property type="match status" value="1"/>
</dbReference>
<dbReference type="InterPro" id="IPR005817">
    <property type="entry name" value="Wnt"/>
</dbReference>
<dbReference type="InterPro" id="IPR043158">
    <property type="entry name" value="Wnt_C"/>
</dbReference>
<dbReference type="PANTHER" id="PTHR12027:SF82">
    <property type="entry name" value="PROTO-ONCOGENE WNT-3"/>
    <property type="match status" value="1"/>
</dbReference>
<dbReference type="PANTHER" id="PTHR12027">
    <property type="entry name" value="WNT RELATED"/>
    <property type="match status" value="1"/>
</dbReference>
<dbReference type="Pfam" id="PF00110">
    <property type="entry name" value="wnt"/>
    <property type="match status" value="1"/>
</dbReference>
<dbReference type="SMART" id="SM00097">
    <property type="entry name" value="WNT1"/>
    <property type="match status" value="1"/>
</dbReference>
<protein>
    <recommendedName>
        <fullName>Protein Wnt-3b</fullName>
    </recommendedName>
</protein>
<comment type="function">
    <text>Ligand for members of the frizzled family of seven transmembrane receptors. Probable developmental protein. May be a signaling molecule which affects the development of discrete regions of tissues. Is likely to signal over only few cell diameters.</text>
</comment>
<comment type="subcellular location">
    <subcellularLocation>
        <location>Secreted</location>
        <location>Extracellular space</location>
        <location>Extracellular matrix</location>
    </subcellularLocation>
</comment>
<comment type="PTM">
    <text evidence="1 3">Palmitoleoylation is required for efficient binding to frizzled receptors. Depalmitoleoylation leads to Wnt signaling pathway inhibition.</text>
</comment>
<comment type="similarity">
    <text evidence="5">Belongs to the Wnt family.</text>
</comment>
<reference key="1">
    <citation type="journal article" date="1992" name="Proc. Natl. Acad. Sci. U.S.A.">
        <title>Diversification of the Wnt gene family on the ancestral lineage of vertebrates.</title>
        <authorList>
            <person name="Sidow A."/>
        </authorList>
    </citation>
    <scope>NUCLEOTIDE SEQUENCE [GENOMIC DNA]</scope>
</reference>
<organism>
    <name type="scientific">Plethodon jordani</name>
    <name type="common">Red-cheeked salamander</name>
    <dbReference type="NCBI Taxonomy" id="8336"/>
    <lineage>
        <taxon>Eukaryota</taxon>
        <taxon>Metazoa</taxon>
        <taxon>Chordata</taxon>
        <taxon>Craniata</taxon>
        <taxon>Vertebrata</taxon>
        <taxon>Euteleostomi</taxon>
        <taxon>Amphibia</taxon>
        <taxon>Batrachia</taxon>
        <taxon>Caudata</taxon>
        <taxon>Salamandroidea</taxon>
        <taxon>Plethodontidae</taxon>
        <taxon>Plethodontinae</taxon>
        <taxon>Plethodon</taxon>
    </lineage>
</organism>
<proteinExistence type="inferred from homology"/>